<proteinExistence type="predicted"/>
<organism>
    <name type="scientific">Acyrthosiphon pisum secondary endosymbiont phage 1</name>
    <name type="common">Bacteriophage APSE-1</name>
    <dbReference type="NCBI Taxonomy" id="2682836"/>
    <lineage>
        <taxon>Viruses</taxon>
        <taxon>Duplodnaviria</taxon>
        <taxon>Heunggongvirae</taxon>
        <taxon>Uroviricota</taxon>
        <taxon>Caudoviricetes</taxon>
        <taxon>Sendosyvirus</taxon>
        <taxon>Sendosyvirus APSE1</taxon>
    </lineage>
</organism>
<protein>
    <recommendedName>
        <fullName>Putative protein p14</fullName>
    </recommendedName>
</protein>
<keyword id="KW-1185">Reference proteome</keyword>
<organismHost>
    <name type="scientific">Escherichia coli</name>
    <dbReference type="NCBI Taxonomy" id="562"/>
</organismHost>
<reference key="1">
    <citation type="journal article" date="1999" name="Virology">
        <title>Isolation and characterization of APSE-1, a bacteriophage infecting the secondary endosymbiont of acyrthosiphon pisum.</title>
        <authorList>
            <person name="van der Wilk F."/>
            <person name="Dullemans A.M."/>
            <person name="Verbeek M."/>
            <person name="van den Heuvel J.F.J.M."/>
        </authorList>
    </citation>
    <scope>NUCLEOTIDE SEQUENCE [LARGE SCALE GENOMIC DNA]</scope>
</reference>
<feature type="chain" id="PRO_0000077857" description="Putative protein p14">
    <location>
        <begin position="1"/>
        <end position="129"/>
    </location>
</feature>
<sequence length="129" mass="14156">MINWKLFLAAGLLLTITALSIVVRFQYVENSRLKLANQSLSAERDAARAQFTHYEQAVDIFNTIAGATQDAHQQAIQASQPQTIKIQEAITPERCAHLPVPTAAVNRLRAHADKISPRAASAHSSNVTR</sequence>
<name>VP14_BPAPS</name>
<dbReference type="EMBL" id="AF157835">
    <property type="protein sequence ID" value="AAF03957.1"/>
    <property type="molecule type" value="Genomic_DNA"/>
</dbReference>
<dbReference type="RefSeq" id="NP_050975.1">
    <property type="nucleotide sequence ID" value="NC_000935.1"/>
</dbReference>
<dbReference type="SMR" id="Q9T1T4"/>
<dbReference type="KEGG" id="vg:1262308"/>
<dbReference type="Proteomes" id="UP000000853">
    <property type="component" value="Genome"/>
</dbReference>
<gene>
    <name type="primary">14</name>
</gene>
<accession>Q9T1T4</accession>